<comment type="function">
    <text evidence="4 6">Bitter taste receptor (PubMed:25796330). Binds quinine, dextromethorphan, diphenhydramine, diphenidol, chlorpheniramine, diphenidol, chloramphenicol, chloroquine and coumarin, this latter being a weak agonist, as well as epiquinidine, ethylhydrocupreine and quinidine (PubMed:28811548).</text>
</comment>
<comment type="subcellular location">
    <subcellularLocation>
        <location evidence="7">Cell membrane</location>
        <topology evidence="3">Multi-pass membrane protein</topology>
    </subcellularLocation>
</comment>
<comment type="tissue specificity">
    <text evidence="4 5">Expressed in the oral cavity, as well as in the gastrointestinal tract, including in the upper palate, tongue, proventriculus, ventriculus, duodenum, jejunum, ileum, cecum and colon.</text>
</comment>
<comment type="similarity">
    <text evidence="2">Belongs to the G-protein coupled receptor T2R family.</text>
</comment>
<proteinExistence type="evidence at protein level"/>
<evidence type="ECO:0000255" key="1"/>
<evidence type="ECO:0000255" key="2">
    <source>
        <dbReference type="RuleBase" id="RU004423"/>
    </source>
</evidence>
<evidence type="ECO:0000255" key="3">
    <source>
        <dbReference type="RuleBase" id="RU004424"/>
    </source>
</evidence>
<evidence type="ECO:0000269" key="4">
    <source>
    </source>
</evidence>
<evidence type="ECO:0000269" key="5">
    <source>
    </source>
</evidence>
<evidence type="ECO:0000269" key="6">
    <source>
    </source>
</evidence>
<evidence type="ECO:0000305" key="7"/>
<dbReference type="EMBL" id="AB249766">
    <property type="protein sequence ID" value="BAE80384.1"/>
    <property type="molecule type" value="Genomic_DNA"/>
</dbReference>
<dbReference type="EMBL" id="AADN04000390">
    <property type="status" value="NOT_ANNOTATED_CDS"/>
    <property type="molecule type" value="Genomic_DNA"/>
</dbReference>
<dbReference type="EMBL" id="KT377136">
    <property type="protein sequence ID" value="AMA21693.1"/>
    <property type="molecule type" value="Genomic_DNA"/>
</dbReference>
<dbReference type="EMBL" id="KT377152">
    <property type="protein sequence ID" value="AMA21709.1"/>
    <property type="molecule type" value="Genomic_DNA"/>
</dbReference>
<dbReference type="EMBL" id="KT377138">
    <property type="protein sequence ID" value="AMA21695.1"/>
    <property type="molecule type" value="Genomic_DNA"/>
</dbReference>
<dbReference type="EMBL" id="KT377139">
    <property type="protein sequence ID" value="AMA21696.1"/>
    <property type="molecule type" value="Genomic_DNA"/>
</dbReference>
<dbReference type="EMBL" id="KT377140">
    <property type="protein sequence ID" value="AMA21697.1"/>
    <property type="molecule type" value="Genomic_DNA"/>
</dbReference>
<dbReference type="EMBL" id="KT377145">
    <property type="protein sequence ID" value="AMA21702.1"/>
    <property type="molecule type" value="Genomic_DNA"/>
</dbReference>
<dbReference type="EMBL" id="KT377147">
    <property type="protein sequence ID" value="AMA21704.1"/>
    <property type="molecule type" value="Genomic_DNA"/>
</dbReference>
<dbReference type="EMBL" id="KT377149">
    <property type="protein sequence ID" value="AMA21706.1"/>
    <property type="molecule type" value="Genomic_DNA"/>
</dbReference>
<dbReference type="EMBL" id="KT377151">
    <property type="protein sequence ID" value="AMA21708.1"/>
    <property type="molecule type" value="Genomic_DNA"/>
</dbReference>
<dbReference type="RefSeq" id="XP_004938201.1">
    <property type="nucleotide sequence ID" value="XM_004938144.2"/>
</dbReference>
<dbReference type="SMR" id="Q2AB83"/>
<dbReference type="STRING" id="9031.ENSGALP00000051324"/>
<dbReference type="KEGG" id="gga:101749182"/>
<dbReference type="VEuPathDB" id="HostDB:geneid_101749182"/>
<dbReference type="InParanoid" id="Q2AB83"/>
<dbReference type="OrthoDB" id="8876749at2759"/>
<dbReference type="PhylomeDB" id="Q2AB83"/>
<dbReference type="Reactome" id="R-GGA-418594">
    <property type="pathway name" value="G alpha (i) signalling events"/>
</dbReference>
<dbReference type="Reactome" id="R-GGA-420499">
    <property type="pathway name" value="Class C/3 (Metabotropic glutamate/pheromone receptors)"/>
</dbReference>
<dbReference type="Reactome" id="R-GGA-9717207">
    <property type="pathway name" value="Sensory perception of sweet, bitter, and umami (glutamate) taste"/>
</dbReference>
<dbReference type="PRO" id="PR:Q2AB83"/>
<dbReference type="Proteomes" id="UP000000539">
    <property type="component" value="Chromosome 1"/>
</dbReference>
<dbReference type="GO" id="GO:0016020">
    <property type="term" value="C:membrane"/>
    <property type="evidence" value="ECO:0000318"/>
    <property type="project" value="GO_Central"/>
</dbReference>
<dbReference type="GO" id="GO:0005886">
    <property type="term" value="C:plasma membrane"/>
    <property type="evidence" value="ECO:0007669"/>
    <property type="project" value="UniProtKB-SubCell"/>
</dbReference>
<dbReference type="GO" id="GO:0033038">
    <property type="term" value="F:bitter taste receptor activity"/>
    <property type="evidence" value="ECO:0000314"/>
    <property type="project" value="UniProtKB"/>
</dbReference>
<dbReference type="GO" id="GO:0004930">
    <property type="term" value="F:G protein-coupled receptor activity"/>
    <property type="evidence" value="ECO:0000314"/>
    <property type="project" value="UniProtKB"/>
</dbReference>
<dbReference type="GO" id="GO:1902656">
    <property type="term" value="P:calcium ion import into cytosol"/>
    <property type="evidence" value="ECO:0000315"/>
    <property type="project" value="AgBase"/>
</dbReference>
<dbReference type="GO" id="GO:0072747">
    <property type="term" value="P:cellular response to chloramphenicol"/>
    <property type="evidence" value="ECO:0000314"/>
    <property type="project" value="AgBase"/>
</dbReference>
<dbReference type="GO" id="GO:1902350">
    <property type="term" value="P:cellular response to chloroquine"/>
    <property type="evidence" value="ECO:0000314"/>
    <property type="project" value="AgBase"/>
</dbReference>
<dbReference type="GO" id="GO:1904561">
    <property type="term" value="P:cellular response to diphenidol"/>
    <property type="evidence" value="ECO:0000314"/>
    <property type="project" value="AgBase"/>
</dbReference>
<dbReference type="GO" id="GO:0071316">
    <property type="term" value="P:cellular response to nicotine"/>
    <property type="evidence" value="ECO:0000314"/>
    <property type="project" value="AgBase"/>
</dbReference>
<dbReference type="GO" id="GO:0097237">
    <property type="term" value="P:cellular response to toxic substance"/>
    <property type="evidence" value="ECO:0000314"/>
    <property type="project" value="AgBase"/>
</dbReference>
<dbReference type="GO" id="GO:0071466">
    <property type="term" value="P:cellular response to xenobiotic stimulus"/>
    <property type="evidence" value="ECO:0000314"/>
    <property type="project" value="AgBase"/>
</dbReference>
<dbReference type="GO" id="GO:0001580">
    <property type="term" value="P:detection of chemical stimulus involved in sensory perception of bitter taste"/>
    <property type="evidence" value="ECO:0000318"/>
    <property type="project" value="GO_Central"/>
</dbReference>
<dbReference type="GO" id="GO:1904558">
    <property type="term" value="P:response to dextromethorphan"/>
    <property type="evidence" value="ECO:0000314"/>
    <property type="project" value="AgBase"/>
</dbReference>
<dbReference type="GO" id="GO:1904560">
    <property type="term" value="P:response to diphenidol"/>
    <property type="evidence" value="ECO:0000314"/>
    <property type="project" value="AgBase"/>
</dbReference>
<dbReference type="GO" id="GO:0080184">
    <property type="term" value="P:response to phenylpropanoid"/>
    <property type="evidence" value="ECO:0000314"/>
    <property type="project" value="AgBase"/>
</dbReference>
<dbReference type="CDD" id="cd15908">
    <property type="entry name" value="7tm_TAS2R40-like"/>
    <property type="match status" value="1"/>
</dbReference>
<dbReference type="FunFam" id="1.20.1070.10:FF:000055">
    <property type="entry name" value="Taste receptor type 2"/>
    <property type="match status" value="1"/>
</dbReference>
<dbReference type="Gene3D" id="1.20.1070.10">
    <property type="entry name" value="Rhodopsin 7-helix transmembrane proteins"/>
    <property type="match status" value="1"/>
</dbReference>
<dbReference type="InterPro" id="IPR007960">
    <property type="entry name" value="TAS2R"/>
</dbReference>
<dbReference type="PANTHER" id="PTHR11394">
    <property type="entry name" value="TASTE RECEPTOR TYPE 2"/>
    <property type="match status" value="1"/>
</dbReference>
<dbReference type="PANTHER" id="PTHR11394:SF47">
    <property type="entry name" value="TASTE RECEPTOR TYPE 2 MEMBER 40"/>
    <property type="match status" value="1"/>
</dbReference>
<dbReference type="Pfam" id="PF05296">
    <property type="entry name" value="TAS2R"/>
    <property type="match status" value="1"/>
</dbReference>
<dbReference type="SUPFAM" id="SSF81321">
    <property type="entry name" value="Family A G protein-coupled receptor-like"/>
    <property type="match status" value="1"/>
</dbReference>
<reference key="1">
    <citation type="journal article" date="2006" name="Mol. Biol. Evol.">
        <title>Lineage-specific expansions and contractions of the bitter taste receptor gene repertoire in vertebrates.</title>
        <authorList>
            <person name="Go Y."/>
        </authorList>
    </citation>
    <scope>NUCLEOTIDE SEQUENCE [GENOMIC DNA]</scope>
</reference>
<reference key="2">
    <citation type="journal article" date="2004" name="Nature">
        <title>Sequence and comparative analysis of the chicken genome provide unique perspectives on vertebrate evolution.</title>
        <authorList>
            <person name="Hillier L.W."/>
            <person name="Miller W."/>
            <person name="Birney E."/>
            <person name="Warren W."/>
            <person name="Hardison R.C."/>
            <person name="Ponting C.P."/>
            <person name="Bork P."/>
            <person name="Burt D.W."/>
            <person name="Groenen M.A.M."/>
            <person name="Delany M.E."/>
            <person name="Dodgson J.B."/>
            <person name="Chinwalla A.T."/>
            <person name="Cliften P.F."/>
            <person name="Clifton S.W."/>
            <person name="Delehaunty K.D."/>
            <person name="Fronick C."/>
            <person name="Fulton R.S."/>
            <person name="Graves T.A."/>
            <person name="Kremitzki C."/>
            <person name="Layman D."/>
            <person name="Magrini V."/>
            <person name="McPherson J.D."/>
            <person name="Miner T.L."/>
            <person name="Minx P."/>
            <person name="Nash W.E."/>
            <person name="Nhan M.N."/>
            <person name="Nelson J.O."/>
            <person name="Oddy L.G."/>
            <person name="Pohl C.S."/>
            <person name="Randall-Maher J."/>
            <person name="Smith S.M."/>
            <person name="Wallis J.W."/>
            <person name="Yang S.-P."/>
            <person name="Romanov M.N."/>
            <person name="Rondelli C.M."/>
            <person name="Paton B."/>
            <person name="Smith J."/>
            <person name="Morrice D."/>
            <person name="Daniels L."/>
            <person name="Tempest H.G."/>
            <person name="Robertson L."/>
            <person name="Masabanda J.S."/>
            <person name="Griffin D.K."/>
            <person name="Vignal A."/>
            <person name="Fillon V."/>
            <person name="Jacobbson L."/>
            <person name="Kerje S."/>
            <person name="Andersson L."/>
            <person name="Crooijmans R.P."/>
            <person name="Aerts J."/>
            <person name="van der Poel J.J."/>
            <person name="Ellegren H."/>
            <person name="Caldwell R.B."/>
            <person name="Hubbard S.J."/>
            <person name="Grafham D.V."/>
            <person name="Kierzek A.M."/>
            <person name="McLaren S.R."/>
            <person name="Overton I.M."/>
            <person name="Arakawa H."/>
            <person name="Beattie K.J."/>
            <person name="Bezzubov Y."/>
            <person name="Boardman P.E."/>
            <person name="Bonfield J.K."/>
            <person name="Croning M.D.R."/>
            <person name="Davies R.M."/>
            <person name="Francis M.D."/>
            <person name="Humphray S.J."/>
            <person name="Scott C.E."/>
            <person name="Taylor R.G."/>
            <person name="Tickle C."/>
            <person name="Brown W.R.A."/>
            <person name="Rogers J."/>
            <person name="Buerstedde J.-M."/>
            <person name="Wilson S.A."/>
            <person name="Stubbs L."/>
            <person name="Ovcharenko I."/>
            <person name="Gordon L."/>
            <person name="Lucas S."/>
            <person name="Miller M.M."/>
            <person name="Inoko H."/>
            <person name="Shiina T."/>
            <person name="Kaufman J."/>
            <person name="Salomonsen J."/>
            <person name="Skjoedt K."/>
            <person name="Wong G.K.-S."/>
            <person name="Wang J."/>
            <person name="Liu B."/>
            <person name="Wang J."/>
            <person name="Yu J."/>
            <person name="Yang H."/>
            <person name="Nefedov M."/>
            <person name="Koriabine M."/>
            <person name="Dejong P.J."/>
            <person name="Goodstadt L."/>
            <person name="Webber C."/>
            <person name="Dickens N.J."/>
            <person name="Letunic I."/>
            <person name="Suyama M."/>
            <person name="Torrents D."/>
            <person name="von Mering C."/>
            <person name="Zdobnov E.M."/>
            <person name="Makova K."/>
            <person name="Nekrutenko A."/>
            <person name="Elnitski L."/>
            <person name="Eswara P."/>
            <person name="King D.C."/>
            <person name="Yang S.-P."/>
            <person name="Tyekucheva S."/>
            <person name="Radakrishnan A."/>
            <person name="Harris R.S."/>
            <person name="Chiaromonte F."/>
            <person name="Taylor J."/>
            <person name="He J."/>
            <person name="Rijnkels M."/>
            <person name="Griffiths-Jones S."/>
            <person name="Ureta-Vidal A."/>
            <person name="Hoffman M.M."/>
            <person name="Severin J."/>
            <person name="Searle S.M.J."/>
            <person name="Law A.S."/>
            <person name="Speed D."/>
            <person name="Waddington D."/>
            <person name="Cheng Z."/>
            <person name="Tuzun E."/>
            <person name="Eichler E."/>
            <person name="Bao Z."/>
            <person name="Flicek P."/>
            <person name="Shteynberg D.D."/>
            <person name="Brent M.R."/>
            <person name="Bye J.M."/>
            <person name="Huckle E.J."/>
            <person name="Chatterji S."/>
            <person name="Dewey C."/>
            <person name="Pachter L."/>
            <person name="Kouranov A."/>
            <person name="Mourelatos Z."/>
            <person name="Hatzigeorgiou A.G."/>
            <person name="Paterson A.H."/>
            <person name="Ivarie R."/>
            <person name="Brandstrom M."/>
            <person name="Axelsson E."/>
            <person name="Backstrom N."/>
            <person name="Berlin S."/>
            <person name="Webster M.T."/>
            <person name="Pourquie O."/>
            <person name="Reymond A."/>
            <person name="Ucla C."/>
            <person name="Antonarakis S.E."/>
            <person name="Long M."/>
            <person name="Emerson J.J."/>
            <person name="Betran E."/>
            <person name="Dupanloup I."/>
            <person name="Kaessmann H."/>
            <person name="Hinrichs A.S."/>
            <person name="Bejerano G."/>
            <person name="Furey T.S."/>
            <person name="Harte R.A."/>
            <person name="Raney B."/>
            <person name="Siepel A."/>
            <person name="Kent W.J."/>
            <person name="Haussler D."/>
            <person name="Eyras E."/>
            <person name="Castelo R."/>
            <person name="Abril J.F."/>
            <person name="Castellano S."/>
            <person name="Camara F."/>
            <person name="Parra G."/>
            <person name="Guigo R."/>
            <person name="Bourque G."/>
            <person name="Tesler G."/>
            <person name="Pevzner P.A."/>
            <person name="Smit A."/>
            <person name="Fulton L.A."/>
            <person name="Mardis E.R."/>
            <person name="Wilson R.K."/>
        </authorList>
    </citation>
    <scope>NUCLEOTIDE SEQUENCE [LARGE SCALE GENOMIC DNA]</scope>
    <source>
        <strain>Red jungle fowl</strain>
    </source>
</reference>
<reference key="3">
    <citation type="submission" date="2015-08" db="EMBL/GenBank/DDBJ databases">
        <title>The genetic polymorphisms of chicken bitter taste receptor genes in Sichuan domestic and Tibetan populations.</title>
        <authorList>
            <person name="Su Y."/>
            <person name="Zhu Q."/>
            <person name="Wu N."/>
            <person name="Chen B."/>
            <person name="Li D."/>
        </authorList>
    </citation>
    <scope>NUCLEOTIDE SEQUENCE [GENOMIC DNA] OF 1-297</scope>
</reference>
<reference key="4">
    <citation type="journal article" date="2015" name="Biochem. Biophys. Res. Commun.">
        <title>Bitter taste receptor T2R1 activities were compatible with behavioral sensitivity to bitterness in chickens.</title>
        <authorList>
            <person name="Hirose N."/>
            <person name="Kawabata Y."/>
            <person name="Kawabata F."/>
            <person name="Nishimura S."/>
            <person name="Tabata S."/>
        </authorList>
    </citation>
    <scope>FUNCTION</scope>
</reference>
<reference key="5">
    <citation type="journal article" date="2015" name="Poult. Sci.">
        <title>Bitter, sweet and umami taste receptors and downstream signaling effectors: Expression in embryonic and growing chicken gastrointestinal tract.</title>
        <authorList>
            <person name="Cheled-Shoval S.L."/>
            <person name="Druyan S."/>
            <person name="Uni Z."/>
        </authorList>
    </citation>
    <scope>TISSUE SPECIFICITY</scope>
</reference>
<reference key="6">
    <citation type="journal article" date="2017" name="Sci. Rep.">
        <title>Ligand binding modes from low resolution GPCR models and mutagenesis: chicken bitter taste receptor as a test-case.</title>
        <authorList>
            <person name="Di Pizio A."/>
            <person name="Kruetzfeldt L.M."/>
            <person name="Cheled-Shoval S."/>
            <person name="Meyerhof W."/>
            <person name="Behrens M."/>
            <person name="Niv M.Y."/>
        </authorList>
    </citation>
    <scope>FUNCTION</scope>
    <scope>MUTAGENESIS OF LYS-86; PHE-89; ASN-93; PHE-181; LEU-185; TYR-244; ASN-247 AND LEU-251</scope>
</reference>
<feature type="chain" id="PRO_5010136905" description="Taste receptor type 2 member 40">
    <location>
        <begin position="1"/>
        <end position="311"/>
    </location>
</feature>
<feature type="topological domain" description="Extracellular" evidence="7">
    <location>
        <begin position="1"/>
        <end position="9"/>
    </location>
</feature>
<feature type="transmembrane region" description="Helical" evidence="1">
    <location>
        <begin position="10"/>
        <end position="30"/>
    </location>
</feature>
<feature type="topological domain" description="Cytoplasmic" evidence="7">
    <location>
        <begin position="31"/>
        <end position="55"/>
    </location>
</feature>
<feature type="transmembrane region" description="Helical" evidence="1">
    <location>
        <begin position="56"/>
        <end position="76"/>
    </location>
</feature>
<feature type="topological domain" description="Extracellular" evidence="7">
    <location>
        <begin position="77"/>
        <end position="87"/>
    </location>
</feature>
<feature type="transmembrane region" description="Helical" evidence="1">
    <location>
        <begin position="88"/>
        <end position="108"/>
    </location>
</feature>
<feature type="topological domain" description="Cytoplasmic" evidence="7">
    <location>
        <begin position="109"/>
        <end position="128"/>
    </location>
</feature>
<feature type="transmembrane region" description="Helical" evidence="1">
    <location>
        <begin position="129"/>
        <end position="149"/>
    </location>
</feature>
<feature type="topological domain" description="Extracellular" evidence="7">
    <location>
        <begin position="150"/>
        <end position="178"/>
    </location>
</feature>
<feature type="transmembrane region" description="Helical" evidence="1">
    <location>
        <begin position="179"/>
        <end position="199"/>
    </location>
</feature>
<feature type="topological domain" description="Cytoplasmic" evidence="7">
    <location>
        <begin position="200"/>
        <end position="235"/>
    </location>
</feature>
<feature type="transmembrane region" description="Helical" evidence="1">
    <location>
        <begin position="236"/>
        <end position="256"/>
    </location>
</feature>
<feature type="topological domain" description="Extracellular" evidence="7">
    <location>
        <begin position="257"/>
        <end position="266"/>
    </location>
</feature>
<feature type="transmembrane region" description="Helical" evidence="1">
    <location>
        <begin position="267"/>
        <end position="287"/>
    </location>
</feature>
<feature type="topological domain" description="Cytoplasmic" evidence="7">
    <location>
        <begin position="288"/>
        <end position="311"/>
    </location>
</feature>
<feature type="mutagenesis site" description="No effect on quinine-, nor diphenhydramine-binding, small decrease in diphenidol- and chlorpheniramine-binding, strong decrease in chloramphenicol- and chloroquine-binding, increase in coumarin-binding." evidence="6">
    <original>K</original>
    <variation>A</variation>
    <location>
        <position position="86"/>
    </location>
</feature>
<feature type="mutagenesis site" description="Strong increase in quinine-binding, loss of diphenhydramine- and coumarin-binding, small decrease in diphenidol-binding, strong decrease in chlorpheniramine-, chloramphenicol- and chloroquine-binding." evidence="6">
    <original>F</original>
    <variation>A</variation>
    <location>
        <position position="89"/>
    </location>
</feature>
<feature type="mutagenesis site" description="Loss of quinine-, diphenhydramine- and coumarin-binding, strong decrease in diphenidol-, chlorpheniramine-, chloramphenicol- and chloroquine-binding." evidence="6">
    <original>N</original>
    <variation>A</variation>
    <location>
        <position position="93"/>
    </location>
</feature>
<feature type="mutagenesis site" description="Loss of quinine-, diphenhydramine- and coumarin-binding, strong decrease in diphenidol-, chloramphenicol- and chloroquine-binding, decrease in chlorpheniramine-binding." evidence="6">
    <original>F</original>
    <variation>A</variation>
    <location>
        <position position="181"/>
    </location>
</feature>
<feature type="mutagenesis site" description="Strong decrease in quinine- and diphenhydramine-binding, no effect on diphenidol-, nor chlorpheniramine-binding, small decrease in chloramphenicol- and chloroquine-binding, loss of coumarin-binding." evidence="6">
    <original>L</original>
    <variation>A</variation>
    <location>
        <position position="185"/>
    </location>
</feature>
<feature type="mutagenesis site" description="Loss of quinine- and diphenhydramine-binding, strong decrease in diphenidol-binding, small decrease in chloramphenicol-binding, increase in coumarin-binding, no effect on chlorpheniramine-, nor chloramphenicol-binding." evidence="6">
    <original>Y</original>
    <variation>A</variation>
    <location>
        <position position="244"/>
    </location>
</feature>
<feature type="mutagenesis site" description="Loss of quinine-, diphenhydramine- and coumarin-binding, strong decrease in diphenidol-binding, small decrease in chlorpheniramine- and chloramphenicol-binding, no effect on chloramphenicol-binding." evidence="6">
    <original>N</original>
    <variation>A</variation>
    <location>
        <position position="247"/>
    </location>
</feature>
<feature type="mutagenesis site" description="Strong decrease in quinine-binding, loss of diphenhydramine-binding, small decrease in diphenidol- and chloramphenicol-binding, no effect on chlorpheniramine-, chloramphenicol-, nor coumarin-binding." evidence="6">
    <original>L</original>
    <variation>A</variation>
    <location>
        <position position="251"/>
    </location>
</feature>
<feature type="sequence conflict" description="In Ref. 3; AMA21693/AMA21695/AMA21696/AMA21697/AMA21702/AMA21704/AMA21706/AMA21708/AMA21709." evidence="7" ref="3">
    <original>S</original>
    <variation>T</variation>
    <location>
        <position position="120"/>
    </location>
</feature>
<accession>Q2AB83</accession>
<accession>A0A0X9UE61</accession>
<sequence>MSSLFSSFCLVIAIFESVVGLLGNGTIVAVSSTSCIRSKILSSYDVIVIFLSLSRFFLQLWMILDFLLIFFCQPSYYEENLFVTFKTVFIFLNSYSFWFAAWLSVFYCVKVASFTQSFLSWLKQRIASLIPWMLITSSLFSFATSLPFFWDSYNAHSNFTTPLTMTNSSKRITTRKTNLIFLILLCNVGIALPSIMLVFSSILLIRSLWRHTRQMQNNATGFRDPSLEALIGAIKTVFSFLLLYITNFIALILILSDTFVPLSTEEAICVVVVAACPAGQSMVLIWSNPRFRELLSSILHYVNSCVRARCS</sequence>
<protein>
    <recommendedName>
        <fullName>Taste receptor type 2 member 40</fullName>
        <shortName>T2R40</shortName>
    </recommendedName>
    <alternativeName>
        <fullName>Taste receptor type 2 member 1</fullName>
        <shortName>T2R1</shortName>
    </alternativeName>
</protein>
<organism>
    <name type="scientific">Gallus gallus</name>
    <name type="common">Chicken</name>
    <dbReference type="NCBI Taxonomy" id="9031"/>
    <lineage>
        <taxon>Eukaryota</taxon>
        <taxon>Metazoa</taxon>
        <taxon>Chordata</taxon>
        <taxon>Craniata</taxon>
        <taxon>Vertebrata</taxon>
        <taxon>Euteleostomi</taxon>
        <taxon>Archelosauria</taxon>
        <taxon>Archosauria</taxon>
        <taxon>Dinosauria</taxon>
        <taxon>Saurischia</taxon>
        <taxon>Theropoda</taxon>
        <taxon>Coelurosauria</taxon>
        <taxon>Aves</taxon>
        <taxon>Neognathae</taxon>
        <taxon>Galloanserae</taxon>
        <taxon>Galliformes</taxon>
        <taxon>Phasianidae</taxon>
        <taxon>Phasianinae</taxon>
        <taxon>Gallus</taxon>
    </lineage>
</organism>
<keyword id="KW-1003">Cell membrane</keyword>
<keyword id="KW-0297">G-protein coupled receptor</keyword>
<keyword id="KW-0472">Membrane</keyword>
<keyword id="KW-0675">Receptor</keyword>
<keyword id="KW-1185">Reference proteome</keyword>
<keyword id="KW-0716">Sensory transduction</keyword>
<keyword id="KW-0919">Taste</keyword>
<keyword id="KW-0807">Transducer</keyword>
<keyword id="KW-0812">Transmembrane</keyword>
<keyword id="KW-1133">Transmembrane helix</keyword>
<name>T2R40_CHICK</name>
<gene>
    <name type="primary">TAS2R40</name>
    <name type="synonym">TAS2R1</name>
</gene>